<evidence type="ECO:0000250" key="1"/>
<evidence type="ECO:0000305" key="2"/>
<accession>P24459</accession>
<gene>
    <name type="primary">ATPA</name>
</gene>
<feature type="chain" id="PRO_0000144405" description="ATP synthase subunit alpha, mitochondrial">
    <location>
        <begin position="1"/>
        <end position="508"/>
    </location>
</feature>
<feature type="binding site" evidence="1">
    <location>
        <begin position="171"/>
        <end position="178"/>
    </location>
    <ligand>
        <name>ATP</name>
        <dbReference type="ChEBI" id="CHEBI:30616"/>
    </ligand>
</feature>
<feature type="site" description="Required for activity" evidence="1">
    <location>
        <position position="373"/>
    </location>
</feature>
<protein>
    <recommendedName>
        <fullName>ATP synthase subunit alpha, mitochondrial</fullName>
    </recommendedName>
</protein>
<keyword id="KW-0066">ATP synthesis</keyword>
<keyword id="KW-0067">ATP-binding</keyword>
<keyword id="KW-0139">CF(1)</keyword>
<keyword id="KW-0375">Hydrogen ion transport</keyword>
<keyword id="KW-0406">Ion transport</keyword>
<keyword id="KW-0472">Membrane</keyword>
<keyword id="KW-0496">Mitochondrion</keyword>
<keyword id="KW-0999">Mitochondrion inner membrane</keyword>
<keyword id="KW-0547">Nucleotide-binding</keyword>
<keyword id="KW-0813">Transport</keyword>
<dbReference type="EMBL" id="M64246">
    <property type="protein sequence ID" value="AAB01582.1"/>
    <property type="molecule type" value="Genomic_DNA"/>
</dbReference>
<dbReference type="PIR" id="S26979">
    <property type="entry name" value="S26979"/>
</dbReference>
<dbReference type="SMR" id="P24459"/>
<dbReference type="ProMEX" id="P24459"/>
<dbReference type="GO" id="GO:0005743">
    <property type="term" value="C:mitochondrial inner membrane"/>
    <property type="evidence" value="ECO:0007669"/>
    <property type="project" value="UniProtKB-SubCell"/>
</dbReference>
<dbReference type="GO" id="GO:0045259">
    <property type="term" value="C:proton-transporting ATP synthase complex"/>
    <property type="evidence" value="ECO:0007669"/>
    <property type="project" value="UniProtKB-KW"/>
</dbReference>
<dbReference type="GO" id="GO:0043531">
    <property type="term" value="F:ADP binding"/>
    <property type="evidence" value="ECO:0007669"/>
    <property type="project" value="TreeGrafter"/>
</dbReference>
<dbReference type="GO" id="GO:0005524">
    <property type="term" value="F:ATP binding"/>
    <property type="evidence" value="ECO:0007669"/>
    <property type="project" value="UniProtKB-KW"/>
</dbReference>
<dbReference type="GO" id="GO:0046933">
    <property type="term" value="F:proton-transporting ATP synthase activity, rotational mechanism"/>
    <property type="evidence" value="ECO:0007669"/>
    <property type="project" value="InterPro"/>
</dbReference>
<dbReference type="CDD" id="cd18113">
    <property type="entry name" value="ATP-synt_F1_alpha_C"/>
    <property type="match status" value="1"/>
</dbReference>
<dbReference type="CDD" id="cd18116">
    <property type="entry name" value="ATP-synt_F1_alpha_N"/>
    <property type="match status" value="1"/>
</dbReference>
<dbReference type="CDD" id="cd01132">
    <property type="entry name" value="F1-ATPase_alpha_CD"/>
    <property type="match status" value="1"/>
</dbReference>
<dbReference type="FunFam" id="1.20.150.20:FF:000001">
    <property type="entry name" value="ATP synthase subunit alpha"/>
    <property type="match status" value="1"/>
</dbReference>
<dbReference type="FunFam" id="2.40.30.20:FF:000001">
    <property type="entry name" value="ATP synthase subunit alpha"/>
    <property type="match status" value="1"/>
</dbReference>
<dbReference type="FunFam" id="3.40.50.300:FF:002432">
    <property type="entry name" value="ATP synthase subunit alpha, mitochondrial"/>
    <property type="match status" value="1"/>
</dbReference>
<dbReference type="Gene3D" id="2.40.30.20">
    <property type="match status" value="1"/>
</dbReference>
<dbReference type="Gene3D" id="1.20.150.20">
    <property type="entry name" value="ATP synthase alpha/beta chain, C-terminal domain"/>
    <property type="match status" value="1"/>
</dbReference>
<dbReference type="Gene3D" id="3.40.50.300">
    <property type="entry name" value="P-loop containing nucleotide triphosphate hydrolases"/>
    <property type="match status" value="1"/>
</dbReference>
<dbReference type="HAMAP" id="MF_01346">
    <property type="entry name" value="ATP_synth_alpha_bact"/>
    <property type="match status" value="1"/>
</dbReference>
<dbReference type="InterPro" id="IPR023366">
    <property type="entry name" value="ATP_synth_asu-like_sf"/>
</dbReference>
<dbReference type="InterPro" id="IPR000793">
    <property type="entry name" value="ATP_synth_asu_C"/>
</dbReference>
<dbReference type="InterPro" id="IPR038376">
    <property type="entry name" value="ATP_synth_asu_C_sf"/>
</dbReference>
<dbReference type="InterPro" id="IPR033732">
    <property type="entry name" value="ATP_synth_F1_a_nt-bd_dom"/>
</dbReference>
<dbReference type="InterPro" id="IPR005294">
    <property type="entry name" value="ATP_synth_F1_asu"/>
</dbReference>
<dbReference type="InterPro" id="IPR020003">
    <property type="entry name" value="ATPase_a/bsu_AS"/>
</dbReference>
<dbReference type="InterPro" id="IPR004100">
    <property type="entry name" value="ATPase_F1/V1/A1_a/bsu_N"/>
</dbReference>
<dbReference type="InterPro" id="IPR036121">
    <property type="entry name" value="ATPase_F1/V1/A1_a/bsu_N_sf"/>
</dbReference>
<dbReference type="InterPro" id="IPR000194">
    <property type="entry name" value="ATPase_F1/V1/A1_a/bsu_nucl-bd"/>
</dbReference>
<dbReference type="InterPro" id="IPR027417">
    <property type="entry name" value="P-loop_NTPase"/>
</dbReference>
<dbReference type="NCBIfam" id="TIGR00962">
    <property type="entry name" value="atpA"/>
    <property type="match status" value="1"/>
</dbReference>
<dbReference type="NCBIfam" id="NF009884">
    <property type="entry name" value="PRK13343.1"/>
    <property type="match status" value="1"/>
</dbReference>
<dbReference type="PANTHER" id="PTHR48082">
    <property type="entry name" value="ATP SYNTHASE SUBUNIT ALPHA, MITOCHONDRIAL"/>
    <property type="match status" value="1"/>
</dbReference>
<dbReference type="PANTHER" id="PTHR48082:SF2">
    <property type="entry name" value="ATP SYNTHASE SUBUNIT ALPHA, MITOCHONDRIAL"/>
    <property type="match status" value="1"/>
</dbReference>
<dbReference type="Pfam" id="PF00006">
    <property type="entry name" value="ATP-synt_ab"/>
    <property type="match status" value="1"/>
</dbReference>
<dbReference type="Pfam" id="PF00306">
    <property type="entry name" value="ATP-synt_ab_C"/>
    <property type="match status" value="1"/>
</dbReference>
<dbReference type="Pfam" id="PF02874">
    <property type="entry name" value="ATP-synt_ab_N"/>
    <property type="match status" value="1"/>
</dbReference>
<dbReference type="PIRSF" id="PIRSF039088">
    <property type="entry name" value="F_ATPase_subunit_alpha"/>
    <property type="match status" value="1"/>
</dbReference>
<dbReference type="SUPFAM" id="SSF47917">
    <property type="entry name" value="C-terminal domain of alpha and beta subunits of F1 ATP synthase"/>
    <property type="match status" value="1"/>
</dbReference>
<dbReference type="SUPFAM" id="SSF50615">
    <property type="entry name" value="N-terminal domain of alpha and beta subunits of F1 ATP synthase"/>
    <property type="match status" value="1"/>
</dbReference>
<dbReference type="SUPFAM" id="SSF52540">
    <property type="entry name" value="P-loop containing nucleoside triphosphate hydrolases"/>
    <property type="match status" value="1"/>
</dbReference>
<dbReference type="PROSITE" id="PS00152">
    <property type="entry name" value="ATPASE_ALPHA_BETA"/>
    <property type="match status" value="1"/>
</dbReference>
<proteinExistence type="inferred from homology"/>
<geneLocation type="mitochondrion"/>
<name>ATPAM_PHAVU</name>
<sequence length="508" mass="55345">MEFSSRAAELTTLLESRMTNFYTNFQVDEIGRVVSVGDGIARVYGLNEIQAGEMVEFASGVKGIALNLENENVGIVVFGSDTAIKEGDLVKRTGSIVDVPAGKAMLGRVVDALGVPIDGRGALSDHERRRVEVKAPGIIERKSVHEPMQTGLKAVDSLVPIGRGQRELIIGDRQTGKTAIAIDTILNQKQMNSRATSESETLYCVYVAIGQKRSTVAQLVQILSEANALEYSILVAATASDPAPLQFLAPYSGCAMGEYFRDNGMHALIIYDDLSKQAVAYRQMSLLLRRPPGREAFPGDVFYLHSRLLERAAKRSDQTGAGSLTALPVIETQAGDVSAYIPTNVISITDGQICLETELFYRGIRPAINVGLSVSRVGSAAQLKAMKQACGSLKLELAQYREVAAFAQFGSDLDAATQALLNRGARLTEVLKQPQYAPLPIEKQILVIYAAVNGFCDRMPLDKIPQYERDILTTIKPELLQSLKGGLTSERKIELEKFLKEKAKNYTL</sequence>
<reference key="1">
    <citation type="journal article" date="1992" name="Curr. Genet.">
        <title>Organization of ATPA coding and 3' flanking sequences associated with cytoplasmic male sterility in Phaseolus vulgaris L.</title>
        <authorList>
            <person name="Chase C.D."/>
            <person name="Ortaga V.M."/>
        </authorList>
    </citation>
    <scope>NUCLEOTIDE SEQUENCE [GENOMIC DNA]</scope>
</reference>
<organism>
    <name type="scientific">Phaseolus vulgaris</name>
    <name type="common">Kidney bean</name>
    <name type="synonym">French bean</name>
    <dbReference type="NCBI Taxonomy" id="3885"/>
    <lineage>
        <taxon>Eukaryota</taxon>
        <taxon>Viridiplantae</taxon>
        <taxon>Streptophyta</taxon>
        <taxon>Embryophyta</taxon>
        <taxon>Tracheophyta</taxon>
        <taxon>Spermatophyta</taxon>
        <taxon>Magnoliopsida</taxon>
        <taxon>eudicotyledons</taxon>
        <taxon>Gunneridae</taxon>
        <taxon>Pentapetalae</taxon>
        <taxon>rosids</taxon>
        <taxon>fabids</taxon>
        <taxon>Fabales</taxon>
        <taxon>Fabaceae</taxon>
        <taxon>Papilionoideae</taxon>
        <taxon>50 kb inversion clade</taxon>
        <taxon>NPAAA clade</taxon>
        <taxon>indigoferoid/millettioid clade</taxon>
        <taxon>Phaseoleae</taxon>
        <taxon>Phaseolus</taxon>
    </lineage>
</organism>
<comment type="function">
    <text evidence="1">Mitochondrial membrane ATP synthase (F(1)F(0) ATP synthase or Complex V) produces ATP from ADP in the presence of a proton gradient across the membrane which is generated by electron transport complexes of the respiratory chain. F-type ATPases consist of two structural domains, F(1) - containing the extramembraneous catalytic core, and F(0) - containing the membrane proton channel, linked together by a central stalk and a peripheral stalk. During catalysis, ATP synthesis in the catalytic domain of F(1) is coupled via a rotary mechanism of the central stalk subunits to proton translocation. Subunits alpha and beta form the catalytic core in F(1). Rotation of the central stalk against the surrounding alpha(3)beta(3) subunits leads to hydrolysis of ATP in three separate catalytic sites on the beta subunits. Subunit alpha does not bear the catalytic high-affinity ATP-binding sites (By similarity).</text>
</comment>
<comment type="subunit">
    <text>F-type ATPases have 2 components, CF(1) - the catalytic core - and CF(0) - the membrane proton channel. CF(1) has five subunits: alpha(3), beta(3), gamma(1), delta(1), epsilon(1). CF(0) has three main subunits: a, b and c.</text>
</comment>
<comment type="subcellular location">
    <subcellularLocation>
        <location>Mitochondrion</location>
    </subcellularLocation>
    <subcellularLocation>
        <location>Mitochondrion inner membrane</location>
    </subcellularLocation>
    <text>Peripheral membrane protein.</text>
</comment>
<comment type="similarity">
    <text evidence="2">Belongs to the ATPase alpha/beta chains family.</text>
</comment>